<feature type="chain" id="PRO_0000115510" description="Small ribosomal subunit protein uS15">
    <location>
        <begin position="1"/>
        <end position="89"/>
    </location>
</feature>
<organism>
    <name type="scientific">Pseudomonas aeruginosa (strain ATCC 15692 / DSM 22644 / CIP 104116 / JCM 14847 / LMG 12228 / 1C / PRS 101 / PAO1)</name>
    <dbReference type="NCBI Taxonomy" id="208964"/>
    <lineage>
        <taxon>Bacteria</taxon>
        <taxon>Pseudomonadati</taxon>
        <taxon>Pseudomonadota</taxon>
        <taxon>Gammaproteobacteria</taxon>
        <taxon>Pseudomonadales</taxon>
        <taxon>Pseudomonadaceae</taxon>
        <taxon>Pseudomonas</taxon>
    </lineage>
</organism>
<evidence type="ECO:0000255" key="1">
    <source>
        <dbReference type="HAMAP-Rule" id="MF_01343"/>
    </source>
</evidence>
<evidence type="ECO:0000305" key="2"/>
<comment type="function">
    <text evidence="1">One of the primary rRNA binding proteins, it binds directly to 16S rRNA where it helps nucleate assembly of the platform of the 30S subunit by binding and bridging several RNA helices of the 16S rRNA.</text>
</comment>
<comment type="function">
    <text evidence="1">Forms an intersubunit bridge (bridge B4) with the 23S rRNA of the 50S subunit in the ribosome.</text>
</comment>
<comment type="subunit">
    <text evidence="1">Part of the 30S ribosomal subunit. Forms a bridge to the 50S subunit in the 70S ribosome, contacting the 23S rRNA.</text>
</comment>
<comment type="similarity">
    <text evidence="1">Belongs to the universal ribosomal protein uS15 family.</text>
</comment>
<accession>Q9HV58</accession>
<dbReference type="EMBL" id="AE004091">
    <property type="protein sequence ID" value="AAG08127.1"/>
    <property type="molecule type" value="Genomic_DNA"/>
</dbReference>
<dbReference type="PIR" id="D83052">
    <property type="entry name" value="D83052"/>
</dbReference>
<dbReference type="RefSeq" id="NP_253429.1">
    <property type="nucleotide sequence ID" value="NC_002516.2"/>
</dbReference>
<dbReference type="RefSeq" id="WP_003095184.1">
    <property type="nucleotide sequence ID" value="NZ_QZGE01000018.1"/>
</dbReference>
<dbReference type="PDB" id="7UNR">
    <property type="method" value="EM"/>
    <property type="resolution" value="2.90 A"/>
    <property type="chains" value="o=1-89"/>
</dbReference>
<dbReference type="PDB" id="7UNU">
    <property type="method" value="EM"/>
    <property type="resolution" value="2.90 A"/>
    <property type="chains" value="o=1-89"/>
</dbReference>
<dbReference type="PDB" id="7UNV">
    <property type="method" value="EM"/>
    <property type="resolution" value="2.70 A"/>
    <property type="chains" value="o=1-89"/>
</dbReference>
<dbReference type="PDB" id="7UNW">
    <property type="method" value="EM"/>
    <property type="resolution" value="2.60 A"/>
    <property type="chains" value="o=1-89"/>
</dbReference>
<dbReference type="PDB" id="8CD1">
    <property type="method" value="EM"/>
    <property type="resolution" value="3.00 A"/>
    <property type="chains" value="o=1-89"/>
</dbReference>
<dbReference type="PDB" id="8RWG">
    <property type="method" value="EM"/>
    <property type="resolution" value="2.46 A"/>
    <property type="chains" value="n=1-89"/>
</dbReference>
<dbReference type="PDBsum" id="7UNR"/>
<dbReference type="PDBsum" id="7UNU"/>
<dbReference type="PDBsum" id="7UNV"/>
<dbReference type="PDBsum" id="7UNW"/>
<dbReference type="PDBsum" id="8CD1"/>
<dbReference type="PDBsum" id="8RWG"/>
<dbReference type="EMDB" id="EMD-16566"/>
<dbReference type="EMDB" id="EMD-19547"/>
<dbReference type="EMDB" id="EMD-26630"/>
<dbReference type="EMDB" id="EMD-26633"/>
<dbReference type="EMDB" id="EMD-26634"/>
<dbReference type="EMDB" id="EMD-26635"/>
<dbReference type="SMR" id="Q9HV58"/>
<dbReference type="FunCoup" id="Q9HV58">
    <property type="interactions" value="602"/>
</dbReference>
<dbReference type="STRING" id="208964.PA4741"/>
<dbReference type="PaxDb" id="208964-PA4741"/>
<dbReference type="DNASU" id="881675"/>
<dbReference type="GeneID" id="77223276"/>
<dbReference type="GeneID" id="881675"/>
<dbReference type="KEGG" id="pae:PA4741"/>
<dbReference type="PATRIC" id="fig|208964.12.peg.4967"/>
<dbReference type="PseudoCAP" id="PA4741"/>
<dbReference type="HOGENOM" id="CLU_148518_0_0_6"/>
<dbReference type="InParanoid" id="Q9HV58"/>
<dbReference type="OrthoDB" id="9799262at2"/>
<dbReference type="PhylomeDB" id="Q9HV58"/>
<dbReference type="BioCyc" id="PAER208964:G1FZ6-4851-MONOMER"/>
<dbReference type="PRO" id="PR:Q9HV58"/>
<dbReference type="Proteomes" id="UP000002438">
    <property type="component" value="Chromosome"/>
</dbReference>
<dbReference type="GO" id="GO:0022627">
    <property type="term" value="C:cytosolic small ribosomal subunit"/>
    <property type="evidence" value="ECO:0000318"/>
    <property type="project" value="GO_Central"/>
</dbReference>
<dbReference type="GO" id="GO:0019843">
    <property type="term" value="F:rRNA binding"/>
    <property type="evidence" value="ECO:0007669"/>
    <property type="project" value="UniProtKB-UniRule"/>
</dbReference>
<dbReference type="GO" id="GO:0003735">
    <property type="term" value="F:structural constituent of ribosome"/>
    <property type="evidence" value="ECO:0007669"/>
    <property type="project" value="InterPro"/>
</dbReference>
<dbReference type="GO" id="GO:0006412">
    <property type="term" value="P:translation"/>
    <property type="evidence" value="ECO:0007669"/>
    <property type="project" value="UniProtKB-UniRule"/>
</dbReference>
<dbReference type="CDD" id="cd00353">
    <property type="entry name" value="Ribosomal_S15p_S13e"/>
    <property type="match status" value="1"/>
</dbReference>
<dbReference type="FunFam" id="1.10.287.10:FF:000002">
    <property type="entry name" value="30S ribosomal protein S15"/>
    <property type="match status" value="1"/>
</dbReference>
<dbReference type="Gene3D" id="6.10.250.3130">
    <property type="match status" value="1"/>
</dbReference>
<dbReference type="Gene3D" id="1.10.287.10">
    <property type="entry name" value="S15/NS1, RNA-binding"/>
    <property type="match status" value="1"/>
</dbReference>
<dbReference type="HAMAP" id="MF_01343_B">
    <property type="entry name" value="Ribosomal_uS15_B"/>
    <property type="match status" value="1"/>
</dbReference>
<dbReference type="InterPro" id="IPR000589">
    <property type="entry name" value="Ribosomal_uS15"/>
</dbReference>
<dbReference type="InterPro" id="IPR005290">
    <property type="entry name" value="Ribosomal_uS15_bac-type"/>
</dbReference>
<dbReference type="InterPro" id="IPR009068">
    <property type="entry name" value="uS15_NS1_RNA-bd_sf"/>
</dbReference>
<dbReference type="NCBIfam" id="TIGR00952">
    <property type="entry name" value="S15_bact"/>
    <property type="match status" value="1"/>
</dbReference>
<dbReference type="PANTHER" id="PTHR23321">
    <property type="entry name" value="RIBOSOMAL PROTEIN S15, BACTERIAL AND ORGANELLAR"/>
    <property type="match status" value="1"/>
</dbReference>
<dbReference type="PANTHER" id="PTHR23321:SF26">
    <property type="entry name" value="SMALL RIBOSOMAL SUBUNIT PROTEIN US15M"/>
    <property type="match status" value="1"/>
</dbReference>
<dbReference type="Pfam" id="PF00312">
    <property type="entry name" value="Ribosomal_S15"/>
    <property type="match status" value="1"/>
</dbReference>
<dbReference type="SMART" id="SM01387">
    <property type="entry name" value="Ribosomal_S15"/>
    <property type="match status" value="1"/>
</dbReference>
<dbReference type="SUPFAM" id="SSF47060">
    <property type="entry name" value="S15/NS1 RNA-binding domain"/>
    <property type="match status" value="1"/>
</dbReference>
<dbReference type="PROSITE" id="PS00362">
    <property type="entry name" value="RIBOSOMAL_S15"/>
    <property type="match status" value="1"/>
</dbReference>
<keyword id="KW-0002">3D-structure</keyword>
<keyword id="KW-1185">Reference proteome</keyword>
<keyword id="KW-0687">Ribonucleoprotein</keyword>
<keyword id="KW-0689">Ribosomal protein</keyword>
<keyword id="KW-0694">RNA-binding</keyword>
<keyword id="KW-0699">rRNA-binding</keyword>
<protein>
    <recommendedName>
        <fullName evidence="1">Small ribosomal subunit protein uS15</fullName>
    </recommendedName>
    <alternativeName>
        <fullName evidence="2">30S ribosomal protein S15</fullName>
    </alternativeName>
</protein>
<gene>
    <name evidence="1" type="primary">rpsO</name>
    <name type="ordered locus">PA4741</name>
</gene>
<reference key="1">
    <citation type="journal article" date="2000" name="Nature">
        <title>Complete genome sequence of Pseudomonas aeruginosa PAO1, an opportunistic pathogen.</title>
        <authorList>
            <person name="Stover C.K."/>
            <person name="Pham X.-Q.T."/>
            <person name="Erwin A.L."/>
            <person name="Mizoguchi S.D."/>
            <person name="Warrener P."/>
            <person name="Hickey M.J."/>
            <person name="Brinkman F.S.L."/>
            <person name="Hufnagle W.O."/>
            <person name="Kowalik D.J."/>
            <person name="Lagrou M."/>
            <person name="Garber R.L."/>
            <person name="Goltry L."/>
            <person name="Tolentino E."/>
            <person name="Westbrock-Wadman S."/>
            <person name="Yuan Y."/>
            <person name="Brody L.L."/>
            <person name="Coulter S.N."/>
            <person name="Folger K.R."/>
            <person name="Kas A."/>
            <person name="Larbig K."/>
            <person name="Lim R.M."/>
            <person name="Smith K.A."/>
            <person name="Spencer D.H."/>
            <person name="Wong G.K.-S."/>
            <person name="Wu Z."/>
            <person name="Paulsen I.T."/>
            <person name="Reizer J."/>
            <person name="Saier M.H. Jr."/>
            <person name="Hancock R.E.W."/>
            <person name="Lory S."/>
            <person name="Olson M.V."/>
        </authorList>
    </citation>
    <scope>NUCLEOTIDE SEQUENCE [LARGE SCALE GENOMIC DNA]</scope>
    <source>
        <strain>ATCC 15692 / DSM 22644 / CIP 104116 / JCM 14847 / LMG 12228 / 1C / PRS 101 / PAO1</strain>
    </source>
</reference>
<sequence length="89" mass="10116">MALSVEEKAQIVNEYKQAEGDTGSPEVQVALLSANINKLQDHFKANGKDHHSRRGLIRMVNQRRKLLDYLKGKDVSRYTALIGRLGLRR</sequence>
<name>RS15_PSEAE</name>
<proteinExistence type="evidence at protein level"/>